<feature type="chain" id="PRO_0000459164" description="Kinesin-like protein KIN-13">
    <location>
        <begin position="1" status="less than"/>
        <end position="439"/>
    </location>
</feature>
<feature type="domain" description="Kinesin motor" evidence="2">
    <location>
        <begin position="1" status="less than"/>
        <end position="240"/>
    </location>
</feature>
<feature type="binding site" evidence="5">
    <location>
        <begin position="1" status="less than"/>
        <end position="5"/>
    </location>
    <ligand>
        <name>ATP</name>
        <dbReference type="ChEBI" id="CHEBI:30616"/>
    </ligand>
</feature>
<feature type="non-terminal residue" evidence="5 6">
    <location>
        <position position="1"/>
    </location>
</feature>
<evidence type="ECO:0000250" key="1">
    <source>
        <dbReference type="UniProtKB" id="E2RTQ2"/>
    </source>
</evidence>
<evidence type="ECO:0000255" key="2">
    <source>
        <dbReference type="PROSITE-ProRule" id="PRU00283"/>
    </source>
</evidence>
<evidence type="ECO:0000269" key="3">
    <source>
    </source>
</evidence>
<evidence type="ECO:0000303" key="4">
    <source>
    </source>
</evidence>
<evidence type="ECO:0000305" key="5"/>
<evidence type="ECO:0000312" key="6">
    <source>
        <dbReference type="EMBL" id="BAB56158.1"/>
    </source>
</evidence>
<reference evidence="6" key="1">
    <citation type="journal article" date="2001" name="Gene">
        <title>Overlapping genes in parasitic protist Giardia lamblia.</title>
        <authorList>
            <person name="Iwabe N."/>
            <person name="Miyata T."/>
        </authorList>
    </citation>
    <scope>NUCLEOTIDE SEQUENCE [MRNA]</scope>
    <source>
        <strain evidence="6">Polish</strain>
    </source>
</reference>
<reference key="2">
    <citation type="journal article" date="2022" name="Korean J. Parasitol.">
        <title>Kinesin-13, a Motor Protein, is Regulated by Polo-like Kinase in Giardia lamblia.</title>
        <authorList>
            <person name="Park E.A."/>
            <person name="Kim J."/>
            <person name="Shin M.Y."/>
            <person name="Park S.J."/>
        </authorList>
    </citation>
    <scope>FUNCTION</scope>
    <scope>INTERACTION WITH PLK</scope>
    <scope>SUBCELLULAR LOCATION</scope>
    <scope>PTM</scope>
    <scope>DISRUPTION PHENOTYPE</scope>
    <source>
        <strain evidence="4">ATCC 30957 / WB</strain>
    </source>
</reference>
<dbReference type="EMBL" id="AB028063">
    <property type="protein sequence ID" value="BAB56158.1"/>
    <property type="molecule type" value="mRNA"/>
</dbReference>
<dbReference type="SMR" id="Q969B0"/>
<dbReference type="VEuPathDB" id="GiardiaDB:DHA2_16945"/>
<dbReference type="VEuPathDB" id="GiardiaDB:GL50581_4050"/>
<dbReference type="VEuPathDB" id="GiardiaDB:GL50803_0016945"/>
<dbReference type="VEuPathDB" id="GiardiaDB:QR46_1315"/>
<dbReference type="GO" id="GO:0097729">
    <property type="term" value="C:9+2 motile cilium"/>
    <property type="evidence" value="ECO:0000250"/>
    <property type="project" value="UniProtKB"/>
</dbReference>
<dbReference type="GO" id="GO:0005930">
    <property type="term" value="C:axoneme"/>
    <property type="evidence" value="ECO:0000314"/>
    <property type="project" value="UniProtKB"/>
</dbReference>
<dbReference type="GO" id="GO:0036064">
    <property type="term" value="C:ciliary basal body"/>
    <property type="evidence" value="ECO:0000314"/>
    <property type="project" value="UniProtKB"/>
</dbReference>
<dbReference type="GO" id="GO:0097542">
    <property type="term" value="C:ciliary tip"/>
    <property type="evidence" value="ECO:0000314"/>
    <property type="project" value="UniProtKB"/>
</dbReference>
<dbReference type="GO" id="GO:0000776">
    <property type="term" value="C:kinetochore"/>
    <property type="evidence" value="ECO:0000250"/>
    <property type="project" value="UniProtKB"/>
</dbReference>
<dbReference type="GO" id="GO:0097568">
    <property type="term" value="C:median body"/>
    <property type="evidence" value="ECO:0000314"/>
    <property type="project" value="UniProtKB"/>
</dbReference>
<dbReference type="GO" id="GO:0005874">
    <property type="term" value="C:microtubule"/>
    <property type="evidence" value="ECO:0007669"/>
    <property type="project" value="UniProtKB-KW"/>
</dbReference>
<dbReference type="GO" id="GO:0005819">
    <property type="term" value="C:spindle"/>
    <property type="evidence" value="ECO:0000250"/>
    <property type="project" value="UniProtKB"/>
</dbReference>
<dbReference type="GO" id="GO:0097597">
    <property type="term" value="C:ventral disc"/>
    <property type="evidence" value="ECO:0000250"/>
    <property type="project" value="UniProtKB"/>
</dbReference>
<dbReference type="GO" id="GO:0005524">
    <property type="term" value="F:ATP binding"/>
    <property type="evidence" value="ECO:0007669"/>
    <property type="project" value="UniProtKB-KW"/>
</dbReference>
<dbReference type="GO" id="GO:0008017">
    <property type="term" value="F:microtubule binding"/>
    <property type="evidence" value="ECO:0007669"/>
    <property type="project" value="InterPro"/>
</dbReference>
<dbReference type="GO" id="GO:0003777">
    <property type="term" value="F:microtubule motor activity"/>
    <property type="evidence" value="ECO:0007669"/>
    <property type="project" value="InterPro"/>
</dbReference>
<dbReference type="GO" id="GO:0060404">
    <property type="term" value="P:axonemal microtubule depolymerization"/>
    <property type="evidence" value="ECO:0000250"/>
    <property type="project" value="UniProtKB"/>
</dbReference>
<dbReference type="GO" id="GO:0051301">
    <property type="term" value="P:cell division"/>
    <property type="evidence" value="ECO:0007669"/>
    <property type="project" value="UniProtKB-KW"/>
</dbReference>
<dbReference type="GO" id="GO:0007018">
    <property type="term" value="P:microtubule-based movement"/>
    <property type="evidence" value="ECO:0007669"/>
    <property type="project" value="InterPro"/>
</dbReference>
<dbReference type="GO" id="GO:0000278">
    <property type="term" value="P:mitotic cell cycle"/>
    <property type="evidence" value="ECO:0000314"/>
    <property type="project" value="UniProtKB"/>
</dbReference>
<dbReference type="GO" id="GO:1990755">
    <property type="term" value="P:mitotic spindle microtubule depolymerization"/>
    <property type="evidence" value="ECO:0000250"/>
    <property type="project" value="UniProtKB"/>
</dbReference>
<dbReference type="GO" id="GO:1902018">
    <property type="term" value="P:negative regulation of cilium assembly"/>
    <property type="evidence" value="ECO:0000316"/>
    <property type="project" value="UniProtKB"/>
</dbReference>
<dbReference type="GO" id="GO:0070462">
    <property type="term" value="P:plus-end specific microtubule depolymerization"/>
    <property type="evidence" value="ECO:0000250"/>
    <property type="project" value="UniProtKB"/>
</dbReference>
<dbReference type="FunFam" id="3.40.850.10:FF:000012">
    <property type="entry name" value="Kinesin-like protein"/>
    <property type="match status" value="1"/>
</dbReference>
<dbReference type="Gene3D" id="3.40.850.10">
    <property type="entry name" value="Kinesin motor domain"/>
    <property type="match status" value="1"/>
</dbReference>
<dbReference type="InterPro" id="IPR027640">
    <property type="entry name" value="Kinesin-like_fam"/>
</dbReference>
<dbReference type="InterPro" id="IPR019821">
    <property type="entry name" value="Kinesin_motor_CS"/>
</dbReference>
<dbReference type="InterPro" id="IPR001752">
    <property type="entry name" value="Kinesin_motor_dom"/>
</dbReference>
<dbReference type="InterPro" id="IPR036961">
    <property type="entry name" value="Kinesin_motor_dom_sf"/>
</dbReference>
<dbReference type="InterPro" id="IPR027417">
    <property type="entry name" value="P-loop_NTPase"/>
</dbReference>
<dbReference type="PANTHER" id="PTHR47971:SF8">
    <property type="entry name" value="KINESIN-LIKE PROTEIN"/>
    <property type="match status" value="1"/>
</dbReference>
<dbReference type="PANTHER" id="PTHR47971">
    <property type="entry name" value="KINESIN-RELATED PROTEIN 6"/>
    <property type="match status" value="1"/>
</dbReference>
<dbReference type="Pfam" id="PF00225">
    <property type="entry name" value="Kinesin"/>
    <property type="match status" value="1"/>
</dbReference>
<dbReference type="PRINTS" id="PR00380">
    <property type="entry name" value="KINESINHEAVY"/>
</dbReference>
<dbReference type="SMART" id="SM00129">
    <property type="entry name" value="KISc"/>
    <property type="match status" value="1"/>
</dbReference>
<dbReference type="SUPFAM" id="SSF52540">
    <property type="entry name" value="P-loop containing nucleoside triphosphate hydrolases"/>
    <property type="match status" value="1"/>
</dbReference>
<dbReference type="PROSITE" id="PS00411">
    <property type="entry name" value="KINESIN_MOTOR_1"/>
    <property type="match status" value="1"/>
</dbReference>
<dbReference type="PROSITE" id="PS50067">
    <property type="entry name" value="KINESIN_MOTOR_2"/>
    <property type="match status" value="1"/>
</dbReference>
<keyword id="KW-0067">ATP-binding</keyword>
<keyword id="KW-0131">Cell cycle</keyword>
<keyword id="KW-0132">Cell division</keyword>
<keyword id="KW-0966">Cell projection</keyword>
<keyword id="KW-0137">Centromere</keyword>
<keyword id="KW-0158">Chromosome</keyword>
<keyword id="KW-0969">Cilium</keyword>
<keyword id="KW-0970">Cilium biogenesis/degradation</keyword>
<keyword id="KW-0963">Cytoplasm</keyword>
<keyword id="KW-0206">Cytoskeleton</keyword>
<keyword id="KW-0282">Flagellum</keyword>
<keyword id="KW-0995">Kinetochore</keyword>
<keyword id="KW-0493">Microtubule</keyword>
<keyword id="KW-0498">Mitosis</keyword>
<keyword id="KW-0505">Motor protein</keyword>
<keyword id="KW-0547">Nucleotide-binding</keyword>
<keyword id="KW-0597">Phosphoprotein</keyword>
<comment type="function">
    <text evidence="1 3">Involved in cell cycle (PubMed:35772734). Involved in formation of flagella, regulation of flagellar length, and formation of median bodies during interphase (PubMed:35772734). Regulates flagellar length in all eight distal flagellar tips by promoting disassembly of the microtubules (By similarity). Disassembles microtubules at the distal flagellar tips in a length-dependent manner in order to maintain different equilibrium lengths of the four flagellar pairs (By similarity). Regulates interphase and mitotic microtubule dynamics (By similarity). Regulates microtubule disassembly dynamics of the dual mitotic spindles and the median body (By similarity).</text>
</comment>
<comment type="subunit">
    <text evidence="3">Interacts with PLK.</text>
</comment>
<comment type="subcellular location">
    <subcellularLocation>
        <location evidence="4">Cytoplasm</location>
        <location evidence="4">Cytoskeleton</location>
    </subcellularLocation>
    <subcellularLocation>
        <location evidence="3">Cell projection</location>
        <location evidence="3">Cilium</location>
        <location evidence="3">Flagellum</location>
    </subcellularLocation>
    <subcellularLocation>
        <location evidence="3">Cytoplasm</location>
        <location evidence="3">Cytoskeleton</location>
        <location evidence="3">Flagellum basal body</location>
    </subcellularLocation>
    <subcellularLocation>
        <location evidence="3">Cytoplasm</location>
        <location evidence="3">Cytoskeleton</location>
        <location evidence="3">Flagellum axoneme</location>
    </subcellularLocation>
    <subcellularLocation>
        <location evidence="1">Cytoplasm</location>
        <location evidence="1">Cytoskeleton</location>
        <location evidence="1">Spindle</location>
    </subcellularLocation>
    <subcellularLocation>
        <location evidence="1">Chromosome</location>
        <location evidence="1">Centromere</location>
        <location evidence="1">Kinetochore</location>
    </subcellularLocation>
    <text evidence="1 3">Localizes and accumulates in a length-dependent manner to the distal regions of flagellar tips (By similarity). Amount at the distal flagellar tip increases during de novo assembly possibly as a consequence of its transport along the flagellum (By similarity). More of it is present in the caudal flagellar tips than in the longer anterior flagellar tips (By similarity). Amount decreases sharply immediately proximal to the flagellar tip indicating that it does not undergo directed retrograde transport on the axoneme, but likely diffuses from the flagella tip toward the base (By similarity). During diffusion, it may be recaptured by anterograde intraflagellar transport (IFT) trains to sequester it to the tip region (By similarity). Localizes to basal bodies, to microtubule (MT)-containing structures such as the median body and axonemes, and to the tips of all eight flagella in interphase (PubMed:35772734). Localizes uniformly to the median body and unevenly at distinct regions of all eight flagella, primarily localizing to the distal flagellar tips, in interphase (By similarity). Localizes to the cytoplasmic axonemes in interphase (By similarity). Localizes to the ventral disk in interphase (By similarity). Localizes to the plus ends of interphase and mitotic microtubules (By similarity). Localizes to single spots on chromosomes during mitosis (By similarity). Localizes to the plus ends of microtubules and kinetochores in anaphase spindles (By similarity). Localizes to the growing flagellar tips of the posterolateral and ventral axonemes during mitotic telophase (By similarity). Also localizes to kinetochores during flagellar duplication (By similarity).</text>
</comment>
<comment type="PTM">
    <text evidence="3">Phosphorylated by PLK.</text>
</comment>
<comment type="disruption phenotype">
    <text evidence="3">Simultaneous morpholino knockdown of both KIN-13 and PLK in interphase cells results in increased length of the caudal and anterior flagella, and to a lesser extent ventral flagella, and reduced volume of the median body.</text>
</comment>
<comment type="similarity">
    <text evidence="5">Belongs to the TRAFAC class myosin-kinesin ATPase superfamily. Kinesin family. KIN-13 subfamily.</text>
</comment>
<accession>Q969B0</accession>
<sequence length="439" mass="48642">GSGKSFTMMHKDNGIYVLACFDILEYLRVYNGSQGNNSKFLVPVVSFFEIYGGKLFDLLNNRQRLQALEDGKGNVQITGLTEKQISSVDAMLNLIDSGLTLRAVGATGANADSSRSHAILQIALKYTKSGKEYSRISFIDLAGSERASDVQNSDRQTRMEGAEINKSLLALKECIRAMDKSNDSKSGAHIPFRGSKLTMVLRDSFIGNSQTVMIANISPNDKSCDNTLNTLRYADRVKELQHGKGGIIKFNVLKMGQNAADVILGTARDDENDVYKAGIVGVNAAPSQQARVPPASQAPITARQIQQNLPQPHYNPNYNPPNSKPAFEPRVETTDEDDMVRTHCDLVDSIYEQEDLIVRAHRRQVDSMMQLVKEEVALLHAIENDQVSIDDWLVKLSDILSRKEEAITTLKGNLSAFKQALQKEEELSHSIDLNKARKK</sequence>
<protein>
    <recommendedName>
        <fullName evidence="5">Kinesin-like protein KIN-13</fullName>
    </recommendedName>
    <alternativeName>
        <fullName evidence="4">GlKin-13</fullName>
    </alternativeName>
    <alternativeName>
        <fullName evidence="4">Kinesin-13</fullName>
    </alternativeName>
    <alternativeName>
        <fullName evidence="5">Plus-end tracking protein kinesin-13</fullName>
        <shortName evidence="5">+TIP kinesin-13</shortName>
    </alternativeName>
</protein>
<gene>
    <name evidence="4" type="primary">kin-13</name>
    <name evidence="5" type="synonym">klp13</name>
</gene>
<name>KIN13_GIAIN</name>
<proteinExistence type="evidence at protein level"/>
<organism evidence="6">
    <name type="scientific">Giardia intestinalis</name>
    <name type="common">Giardia lamblia</name>
    <dbReference type="NCBI Taxonomy" id="5741"/>
    <lineage>
        <taxon>Eukaryota</taxon>
        <taxon>Metamonada</taxon>
        <taxon>Diplomonadida</taxon>
        <taxon>Hexamitidae</taxon>
        <taxon>Giardiinae</taxon>
        <taxon>Giardia</taxon>
    </lineage>
</organism>